<keyword id="KW-0225">Disease variant</keyword>
<keyword id="KW-0349">Heme</keyword>
<keyword id="KW-0408">Iron</keyword>
<keyword id="KW-0449">Lipoprotein</keyword>
<keyword id="KW-0456">Lyase</keyword>
<keyword id="KW-0472">Membrane</keyword>
<keyword id="KW-0479">Metal-binding</keyword>
<keyword id="KW-1013">Microphthalmia</keyword>
<keyword id="KW-0496">Mitochondrion</keyword>
<keyword id="KW-0999">Mitochondrion inner membrane</keyword>
<keyword id="KW-0519">Myristate</keyword>
<keyword id="KW-1267">Proteomics identification</keyword>
<keyword id="KW-1185">Reference proteome</keyword>
<keyword id="KW-0677">Repeat</keyword>
<evidence type="ECO:0000256" key="1">
    <source>
        <dbReference type="SAM" id="MobiDB-lite"/>
    </source>
</evidence>
<evidence type="ECO:0000269" key="2">
    <source>
    </source>
</evidence>
<evidence type="ECO:0000269" key="3">
    <source>
    </source>
</evidence>
<evidence type="ECO:0000269" key="4">
    <source>
    </source>
</evidence>
<evidence type="ECO:0000269" key="5">
    <source>
    </source>
</evidence>
<evidence type="ECO:0000305" key="6"/>
<evidence type="ECO:0000305" key="7">
    <source>
    </source>
</evidence>
<evidence type="ECO:0000305" key="8">
    <source>
    </source>
</evidence>
<evidence type="ECO:0000305" key="9">
    <source>
    </source>
</evidence>
<evidence type="ECO:0000305" key="10">
    <source>
    </source>
</evidence>
<evidence type="ECO:0000305" key="11">
    <source>
    </source>
</evidence>
<evidence type="ECO:0000312" key="12">
    <source>
        <dbReference type="HGNC" id="HGNC:4837"/>
    </source>
</evidence>
<reference key="1">
    <citation type="journal article" date="1996" name="Genomics">
        <title>Cloning and characterization of a putative human holocytochrome c-type synthetase gene (HCCS) isolated from the critical region for microphthalmia with linear skin defects (MLS).</title>
        <authorList>
            <person name="Schaefer L."/>
            <person name="Ballabio A."/>
            <person name="Zoghbi H.Y."/>
        </authorList>
    </citation>
    <scope>NUCLEOTIDE SEQUENCE [MRNA]</scope>
</reference>
<reference key="2">
    <citation type="journal article" date="1998" name="Am. J. Med. Genet.">
        <title>Genomic structure of a human holocytochrome c-type synthetase gene in Xp22.3 and mutation analysis in patients with Rett syndrome.</title>
        <authorList>
            <person name="van den Veyver I.B."/>
            <person name="Subramanian S."/>
            <person name="Zoghbi H.Y."/>
        </authorList>
    </citation>
    <scope>NUCLEOTIDE SEQUENCE [GENOMIC DNA]</scope>
</reference>
<reference key="3">
    <citation type="journal article" date="2004" name="Nat. Genet.">
        <title>Complete sequencing and characterization of 21,243 full-length human cDNAs.</title>
        <authorList>
            <person name="Ota T."/>
            <person name="Suzuki Y."/>
            <person name="Nishikawa T."/>
            <person name="Otsuki T."/>
            <person name="Sugiyama T."/>
            <person name="Irie R."/>
            <person name="Wakamatsu A."/>
            <person name="Hayashi K."/>
            <person name="Sato H."/>
            <person name="Nagai K."/>
            <person name="Kimura K."/>
            <person name="Makita H."/>
            <person name="Sekine M."/>
            <person name="Obayashi M."/>
            <person name="Nishi T."/>
            <person name="Shibahara T."/>
            <person name="Tanaka T."/>
            <person name="Ishii S."/>
            <person name="Yamamoto J."/>
            <person name="Saito K."/>
            <person name="Kawai Y."/>
            <person name="Isono Y."/>
            <person name="Nakamura Y."/>
            <person name="Nagahari K."/>
            <person name="Murakami K."/>
            <person name="Yasuda T."/>
            <person name="Iwayanagi T."/>
            <person name="Wagatsuma M."/>
            <person name="Shiratori A."/>
            <person name="Sudo H."/>
            <person name="Hosoiri T."/>
            <person name="Kaku Y."/>
            <person name="Kodaira H."/>
            <person name="Kondo H."/>
            <person name="Sugawara M."/>
            <person name="Takahashi M."/>
            <person name="Kanda K."/>
            <person name="Yokoi T."/>
            <person name="Furuya T."/>
            <person name="Kikkawa E."/>
            <person name="Omura Y."/>
            <person name="Abe K."/>
            <person name="Kamihara K."/>
            <person name="Katsuta N."/>
            <person name="Sato K."/>
            <person name="Tanikawa M."/>
            <person name="Yamazaki M."/>
            <person name="Ninomiya K."/>
            <person name="Ishibashi T."/>
            <person name="Yamashita H."/>
            <person name="Murakawa K."/>
            <person name="Fujimori K."/>
            <person name="Tanai H."/>
            <person name="Kimata M."/>
            <person name="Watanabe M."/>
            <person name="Hiraoka S."/>
            <person name="Chiba Y."/>
            <person name="Ishida S."/>
            <person name="Ono Y."/>
            <person name="Takiguchi S."/>
            <person name="Watanabe S."/>
            <person name="Yosida M."/>
            <person name="Hotuta T."/>
            <person name="Kusano J."/>
            <person name="Kanehori K."/>
            <person name="Takahashi-Fujii A."/>
            <person name="Hara H."/>
            <person name="Tanase T.-O."/>
            <person name="Nomura Y."/>
            <person name="Togiya S."/>
            <person name="Komai F."/>
            <person name="Hara R."/>
            <person name="Takeuchi K."/>
            <person name="Arita M."/>
            <person name="Imose N."/>
            <person name="Musashino K."/>
            <person name="Yuuki H."/>
            <person name="Oshima A."/>
            <person name="Sasaki N."/>
            <person name="Aotsuka S."/>
            <person name="Yoshikawa Y."/>
            <person name="Matsunawa H."/>
            <person name="Ichihara T."/>
            <person name="Shiohata N."/>
            <person name="Sano S."/>
            <person name="Moriya S."/>
            <person name="Momiyama H."/>
            <person name="Satoh N."/>
            <person name="Takami S."/>
            <person name="Terashima Y."/>
            <person name="Suzuki O."/>
            <person name="Nakagawa S."/>
            <person name="Senoh A."/>
            <person name="Mizoguchi H."/>
            <person name="Goto Y."/>
            <person name="Shimizu F."/>
            <person name="Wakebe H."/>
            <person name="Hishigaki H."/>
            <person name="Watanabe T."/>
            <person name="Sugiyama A."/>
            <person name="Takemoto M."/>
            <person name="Kawakami B."/>
            <person name="Yamazaki M."/>
            <person name="Watanabe K."/>
            <person name="Kumagai A."/>
            <person name="Itakura S."/>
            <person name="Fukuzumi Y."/>
            <person name="Fujimori Y."/>
            <person name="Komiyama M."/>
            <person name="Tashiro H."/>
            <person name="Tanigami A."/>
            <person name="Fujiwara T."/>
            <person name="Ono T."/>
            <person name="Yamada K."/>
            <person name="Fujii Y."/>
            <person name="Ozaki K."/>
            <person name="Hirao M."/>
            <person name="Ohmori Y."/>
            <person name="Kawabata A."/>
            <person name="Hikiji T."/>
            <person name="Kobatake N."/>
            <person name="Inagaki H."/>
            <person name="Ikema Y."/>
            <person name="Okamoto S."/>
            <person name="Okitani R."/>
            <person name="Kawakami T."/>
            <person name="Noguchi S."/>
            <person name="Itoh T."/>
            <person name="Shigeta K."/>
            <person name="Senba T."/>
            <person name="Matsumura K."/>
            <person name="Nakajima Y."/>
            <person name="Mizuno T."/>
            <person name="Morinaga M."/>
            <person name="Sasaki M."/>
            <person name="Togashi T."/>
            <person name="Oyama M."/>
            <person name="Hata H."/>
            <person name="Watanabe M."/>
            <person name="Komatsu T."/>
            <person name="Mizushima-Sugano J."/>
            <person name="Satoh T."/>
            <person name="Shirai Y."/>
            <person name="Takahashi Y."/>
            <person name="Nakagawa K."/>
            <person name="Okumura K."/>
            <person name="Nagase T."/>
            <person name="Nomura N."/>
            <person name="Kikuchi H."/>
            <person name="Masuho Y."/>
            <person name="Yamashita R."/>
            <person name="Nakai K."/>
            <person name="Yada T."/>
            <person name="Nakamura Y."/>
            <person name="Ohara O."/>
            <person name="Isogai T."/>
            <person name="Sugano S."/>
        </authorList>
    </citation>
    <scope>NUCLEOTIDE SEQUENCE [LARGE SCALE MRNA]</scope>
    <source>
        <tissue>Testis</tissue>
    </source>
</reference>
<reference key="4">
    <citation type="submission" date="2005-07" db="EMBL/GenBank/DDBJ databases">
        <authorList>
            <person name="Mural R.J."/>
            <person name="Istrail S."/>
            <person name="Sutton G.G."/>
            <person name="Florea L."/>
            <person name="Halpern A.L."/>
            <person name="Mobarry C.M."/>
            <person name="Lippert R."/>
            <person name="Walenz B."/>
            <person name="Shatkay H."/>
            <person name="Dew I."/>
            <person name="Miller J.R."/>
            <person name="Flanigan M.J."/>
            <person name="Edwards N.J."/>
            <person name="Bolanos R."/>
            <person name="Fasulo D."/>
            <person name="Halldorsson B.V."/>
            <person name="Hannenhalli S."/>
            <person name="Turner R."/>
            <person name="Yooseph S."/>
            <person name="Lu F."/>
            <person name="Nusskern D.R."/>
            <person name="Shue B.C."/>
            <person name="Zheng X.H."/>
            <person name="Zhong F."/>
            <person name="Delcher A.L."/>
            <person name="Huson D.H."/>
            <person name="Kravitz S.A."/>
            <person name="Mouchard L."/>
            <person name="Reinert K."/>
            <person name="Remington K.A."/>
            <person name="Clark A.G."/>
            <person name="Waterman M.S."/>
            <person name="Eichler E.E."/>
            <person name="Adams M.D."/>
            <person name="Hunkapiller M.W."/>
            <person name="Myers E.W."/>
            <person name="Venter J.C."/>
        </authorList>
    </citation>
    <scope>NUCLEOTIDE SEQUENCE [LARGE SCALE GENOMIC DNA]</scope>
</reference>
<reference key="5">
    <citation type="journal article" date="2004" name="Genome Res.">
        <title>The status, quality, and expansion of the NIH full-length cDNA project: the Mammalian Gene Collection (MGC).</title>
        <authorList>
            <consortium name="The MGC Project Team"/>
        </authorList>
    </citation>
    <scope>NUCLEOTIDE SEQUENCE [LARGE SCALE MRNA]</scope>
    <source>
        <tissue>Brain</tissue>
        <tissue>Ovary</tissue>
    </source>
</reference>
<reference key="6">
    <citation type="journal article" date="2011" name="BMC Syst. Biol.">
        <title>Initial characterization of the human central proteome.</title>
        <authorList>
            <person name="Burkard T.R."/>
            <person name="Planyavsky M."/>
            <person name="Kaupe I."/>
            <person name="Breitwieser F.P."/>
            <person name="Buerckstuemmer T."/>
            <person name="Bennett K.L."/>
            <person name="Superti-Furga G."/>
            <person name="Colinge J."/>
        </authorList>
    </citation>
    <scope>IDENTIFICATION BY MASS SPECTROMETRY [LARGE SCALE ANALYSIS]</scope>
</reference>
<reference key="7">
    <citation type="journal article" date="2013" name="Proc. Natl. Acad. Sci. U.S.A.">
        <title>Human mitochondrial holocytochrome c synthase's heme binding, maturation determinants, and complex formation with cytochrome c.</title>
        <authorList>
            <person name="San Francisco B."/>
            <person name="Bretsnyder E.C."/>
            <person name="Kranz R.G."/>
        </authorList>
    </citation>
    <scope>FUNCTION</scope>
    <scope>CATALYTIC ACTIVITY</scope>
    <scope>SUBCELLULAR LOCATION</scope>
    <scope>MUTAGENESIS OF HIS-154 AND HIS-211</scope>
</reference>
<reference key="8">
    <citation type="journal article" date="2014" name="Nat. Commun.">
        <title>Global profiling of co- and post-translationally N-myristoylated proteomes in human cells.</title>
        <authorList>
            <person name="Thinon E."/>
            <person name="Serwa R.A."/>
            <person name="Broncel M."/>
            <person name="Brannigan J.A."/>
            <person name="Brassat U."/>
            <person name="Wright M.H."/>
            <person name="Heal W.P."/>
            <person name="Wilkinson A.J."/>
            <person name="Mann D.J."/>
            <person name="Tate E.W."/>
        </authorList>
    </citation>
    <scope>MYRISTOYLATION AT GLY-2</scope>
    <scope>CLEAVAGE OF INITIATOR METHIONINE</scope>
    <scope>IDENTIFICATION BY MASS SPECTROMETRY</scope>
</reference>
<reference key="9">
    <citation type="journal article" date="2015" name="Angew. Chem. Int. Ed.">
        <title>Multifunctional reagents for quantitative proteome-wide analysis of protein modification in human cells and dynamic profiling of protein lipidation during vertebrate development.</title>
        <authorList>
            <person name="Broncel M."/>
            <person name="Serwa R.A."/>
            <person name="Ciepla P."/>
            <person name="Krause E."/>
            <person name="Dallman M.J."/>
            <person name="Magee A.I."/>
            <person name="Tate E.W."/>
        </authorList>
    </citation>
    <scope>MYRISTOYLATION AT GLY-2</scope>
    <scope>CLEAVAGE OF INITIATOR METHIONINE</scope>
    <scope>IDENTIFICATION BY MASS SPECTROMETRY</scope>
</reference>
<reference key="10">
    <citation type="journal article" date="2015" name="Proteomics">
        <title>N-terminome analysis of the human mitochondrial proteome.</title>
        <authorList>
            <person name="Vaca Jacome A.S."/>
            <person name="Rabilloud T."/>
            <person name="Schaeffer-Reiss C."/>
            <person name="Rompais M."/>
            <person name="Ayoub D."/>
            <person name="Lane L."/>
            <person name="Bairoch A."/>
            <person name="Van Dorsselaer A."/>
            <person name="Carapito C."/>
        </authorList>
    </citation>
    <scope>IDENTIFICATION BY MASS SPECTROMETRY [LARGE SCALE ANALYSIS]</scope>
</reference>
<reference key="11">
    <citation type="journal article" date="2006" name="Am. J. Hum. Genet.">
        <title>Mutations of the mitochondrial holocytochrome c-type synthase in X-linked dominant microphthalmia with linear skin defects syndrome.</title>
        <authorList>
            <person name="Wimplinger I."/>
            <person name="Morleo M."/>
            <person name="Rosenberger G."/>
            <person name="Iaconis D."/>
            <person name="Orth U."/>
            <person name="Meinecke P."/>
            <person name="Lerer I."/>
            <person name="Ballabio A."/>
            <person name="Gal A."/>
            <person name="Franco B."/>
            <person name="Kutsche K."/>
        </authorList>
    </citation>
    <scope>VARIANTS LSDMCA1 197-ARG--SER-268 DEL AND CYS-217</scope>
    <scope>CHARACTERIZATION OF VARIANTS LSDMCA1 197-ARG--SER-268 DEL AND CYS-217</scope>
    <scope>SUBCELLULAR LOCATION</scope>
</reference>
<name>CCHL_HUMAN</name>
<protein>
    <recommendedName>
        <fullName evidence="8 11">Holocytochrome c-type synthase</fullName>
        <ecNumber evidence="3">4.4.1.17</ecNumber>
    </recommendedName>
    <alternativeName>
        <fullName evidence="8">Cytochrome c-type heme lyase</fullName>
    </alternativeName>
</protein>
<sequence length="268" mass="30602">MGLSPSAPAVAVQASNASASPPSGCPMHEGKMKGCPVNTEPSGPTCEKKTYSVPAHQERAYEYVECPIRGTAAENKENLDPSNLMPPPNQTPAPDQPFALSTVREESSIPRADSEKKWVYPSEQMFWNAMLKKGWKWKDEDISQKDMYNIIRIHNQNNEQAWKEILKWEALHAAECPCGPSLIRFGGKAKEYSPRARIRSWMGYELPFDRHDWIINRCGTEVRYVIDYYDGGEVNKDYQFTILDVRPALDSLSAVWDRMKVAWWRWTS</sequence>
<dbReference type="EC" id="4.4.1.17" evidence="3"/>
<dbReference type="EMBL" id="U36787">
    <property type="protein sequence ID" value="AAB19007.1"/>
    <property type="molecule type" value="mRNA"/>
</dbReference>
<dbReference type="EMBL" id="AF053015">
    <property type="protein sequence ID" value="AAC35274.1"/>
    <property type="molecule type" value="Genomic_DNA"/>
</dbReference>
<dbReference type="EMBL" id="AF053010">
    <property type="protein sequence ID" value="AAC35274.1"/>
    <property type="status" value="JOINED"/>
    <property type="molecule type" value="Genomic_DNA"/>
</dbReference>
<dbReference type="EMBL" id="AF053011">
    <property type="protein sequence ID" value="AAC35274.1"/>
    <property type="status" value="JOINED"/>
    <property type="molecule type" value="Genomic_DNA"/>
</dbReference>
<dbReference type="EMBL" id="AF053012">
    <property type="protein sequence ID" value="AAC35274.1"/>
    <property type="status" value="JOINED"/>
    <property type="molecule type" value="Genomic_DNA"/>
</dbReference>
<dbReference type="EMBL" id="AF053013">
    <property type="protein sequence ID" value="AAC35274.1"/>
    <property type="status" value="JOINED"/>
    <property type="molecule type" value="Genomic_DNA"/>
</dbReference>
<dbReference type="EMBL" id="AF053014">
    <property type="protein sequence ID" value="AAC35274.1"/>
    <property type="status" value="JOINED"/>
    <property type="molecule type" value="Genomic_DNA"/>
</dbReference>
<dbReference type="EMBL" id="AK097815">
    <property type="protein sequence ID" value="BAG53533.1"/>
    <property type="molecule type" value="mRNA"/>
</dbReference>
<dbReference type="EMBL" id="CH471074">
    <property type="protein sequence ID" value="EAW98783.1"/>
    <property type="molecule type" value="Genomic_DNA"/>
</dbReference>
<dbReference type="EMBL" id="BC001691">
    <property type="protein sequence ID" value="AAH01691.1"/>
    <property type="molecule type" value="mRNA"/>
</dbReference>
<dbReference type="EMBL" id="BC095455">
    <property type="protein sequence ID" value="AAH95455.1"/>
    <property type="molecule type" value="mRNA"/>
</dbReference>
<dbReference type="CCDS" id="CCDS14139.1"/>
<dbReference type="PIR" id="G02133">
    <property type="entry name" value="G02133"/>
</dbReference>
<dbReference type="RefSeq" id="NP_001116080.1">
    <property type="nucleotide sequence ID" value="NM_001122608.3"/>
</dbReference>
<dbReference type="RefSeq" id="NP_001165462.1">
    <property type="nucleotide sequence ID" value="NM_001171991.3"/>
</dbReference>
<dbReference type="RefSeq" id="NP_005324.3">
    <property type="nucleotide sequence ID" value="NM_005333.5"/>
</dbReference>
<dbReference type="BioGRID" id="109302">
    <property type="interactions" value="124"/>
</dbReference>
<dbReference type="FunCoup" id="P53701">
    <property type="interactions" value="2049"/>
</dbReference>
<dbReference type="IntAct" id="P53701">
    <property type="interactions" value="71"/>
</dbReference>
<dbReference type="MINT" id="P53701"/>
<dbReference type="STRING" id="9606.ENSP00000370139"/>
<dbReference type="GlyGen" id="P53701">
    <property type="glycosylation" value="2 sites, 1 O-linked glycan (1 site)"/>
</dbReference>
<dbReference type="iPTMnet" id="P53701"/>
<dbReference type="PhosphoSitePlus" id="P53701"/>
<dbReference type="SwissPalm" id="P53701"/>
<dbReference type="BioMuta" id="HCCS"/>
<dbReference type="DMDM" id="1705694"/>
<dbReference type="jPOST" id="P53701"/>
<dbReference type="MassIVE" id="P53701"/>
<dbReference type="PaxDb" id="9606-ENSP00000326579"/>
<dbReference type="PeptideAtlas" id="P53701"/>
<dbReference type="ProteomicsDB" id="56613"/>
<dbReference type="Pumba" id="P53701"/>
<dbReference type="Antibodypedia" id="479">
    <property type="antibodies" value="308 antibodies from 33 providers"/>
</dbReference>
<dbReference type="DNASU" id="3052"/>
<dbReference type="Ensembl" id="ENST00000321143.8">
    <property type="protein sequence ID" value="ENSP00000326579.4"/>
    <property type="gene ID" value="ENSG00000004961.15"/>
</dbReference>
<dbReference type="Ensembl" id="ENST00000380762.5">
    <property type="protein sequence ID" value="ENSP00000370139.4"/>
    <property type="gene ID" value="ENSG00000004961.15"/>
</dbReference>
<dbReference type="Ensembl" id="ENST00000380763.7">
    <property type="protein sequence ID" value="ENSP00000370140.3"/>
    <property type="gene ID" value="ENSG00000004961.15"/>
</dbReference>
<dbReference type="GeneID" id="3052"/>
<dbReference type="KEGG" id="hsa:3052"/>
<dbReference type="MANE-Select" id="ENST00000380762.5">
    <property type="protein sequence ID" value="ENSP00000370139.4"/>
    <property type="RefSeq nucleotide sequence ID" value="NM_005333.5"/>
    <property type="RefSeq protein sequence ID" value="NP_005324.3"/>
</dbReference>
<dbReference type="UCSC" id="uc004cuj.4">
    <property type="organism name" value="human"/>
</dbReference>
<dbReference type="AGR" id="HGNC:4837"/>
<dbReference type="CTD" id="3052"/>
<dbReference type="DisGeNET" id="3052"/>
<dbReference type="GeneCards" id="HCCS"/>
<dbReference type="GeneReviews" id="HCCS"/>
<dbReference type="HGNC" id="HGNC:4837">
    <property type="gene designation" value="HCCS"/>
</dbReference>
<dbReference type="HPA" id="ENSG00000004961">
    <property type="expression patterns" value="Low tissue specificity"/>
</dbReference>
<dbReference type="MalaCards" id="HCCS"/>
<dbReference type="MIM" id="300056">
    <property type="type" value="gene"/>
</dbReference>
<dbReference type="MIM" id="309801">
    <property type="type" value="phenotype"/>
</dbReference>
<dbReference type="neXtProt" id="NX_P53701"/>
<dbReference type="OpenTargets" id="ENSG00000004961"/>
<dbReference type="Orphanet" id="2556">
    <property type="disease" value="Microphthalmia with linear skin defects syndrome"/>
</dbReference>
<dbReference type="PharmGKB" id="PA29214"/>
<dbReference type="VEuPathDB" id="HostDB:ENSG00000004961"/>
<dbReference type="eggNOG" id="KOG3996">
    <property type="taxonomic scope" value="Eukaryota"/>
</dbReference>
<dbReference type="GeneTree" id="ENSGT00390000004175"/>
<dbReference type="HOGENOM" id="CLU_048602_2_1_1"/>
<dbReference type="InParanoid" id="P53701"/>
<dbReference type="OMA" id="NEESWKH"/>
<dbReference type="OrthoDB" id="4243at2759"/>
<dbReference type="PAN-GO" id="P53701">
    <property type="GO annotations" value="3 GO annotations based on evolutionary models"/>
</dbReference>
<dbReference type="PhylomeDB" id="P53701"/>
<dbReference type="TreeFam" id="TF105185"/>
<dbReference type="BioCyc" id="MetaCyc:HS00120-MONOMER"/>
<dbReference type="BRENDA" id="4.4.1.17">
    <property type="organism ID" value="2681"/>
</dbReference>
<dbReference type="PathwayCommons" id="P53701"/>
<dbReference type="Reactome" id="R-HSA-611105">
    <property type="pathway name" value="Respiratory electron transport"/>
</dbReference>
<dbReference type="SignaLink" id="P53701"/>
<dbReference type="BioGRID-ORCS" id="3052">
    <property type="hits" value="94 hits in 791 CRISPR screens"/>
</dbReference>
<dbReference type="ChiTaRS" id="HCCS">
    <property type="organism name" value="human"/>
</dbReference>
<dbReference type="GeneWiki" id="HCCS_(gene)"/>
<dbReference type="GenomeRNAi" id="3052"/>
<dbReference type="Pharos" id="P53701">
    <property type="development level" value="Tbio"/>
</dbReference>
<dbReference type="PRO" id="PR:P53701"/>
<dbReference type="Proteomes" id="UP000005640">
    <property type="component" value="Chromosome X"/>
</dbReference>
<dbReference type="RNAct" id="P53701">
    <property type="molecule type" value="protein"/>
</dbReference>
<dbReference type="Bgee" id="ENSG00000004961">
    <property type="expression patterns" value="Expressed in skeletal muscle tissue of biceps brachii and 200 other cell types or tissues"/>
</dbReference>
<dbReference type="ExpressionAtlas" id="P53701">
    <property type="expression patterns" value="baseline and differential"/>
</dbReference>
<dbReference type="GO" id="GO:0005829">
    <property type="term" value="C:cytosol"/>
    <property type="evidence" value="ECO:0007669"/>
    <property type="project" value="Ensembl"/>
</dbReference>
<dbReference type="GO" id="GO:0016020">
    <property type="term" value="C:membrane"/>
    <property type="evidence" value="ECO:0000314"/>
    <property type="project" value="UniProtKB"/>
</dbReference>
<dbReference type="GO" id="GO:0005743">
    <property type="term" value="C:mitochondrial inner membrane"/>
    <property type="evidence" value="ECO:0000304"/>
    <property type="project" value="Reactome"/>
</dbReference>
<dbReference type="GO" id="GO:0005739">
    <property type="term" value="C:mitochondrion"/>
    <property type="evidence" value="ECO:0000314"/>
    <property type="project" value="MGI"/>
</dbReference>
<dbReference type="GO" id="GO:0020037">
    <property type="term" value="F:heme binding"/>
    <property type="evidence" value="ECO:0000314"/>
    <property type="project" value="UniProtKB"/>
</dbReference>
<dbReference type="GO" id="GO:0004408">
    <property type="term" value="F:holocytochrome-c synthase activity"/>
    <property type="evidence" value="ECO:0000314"/>
    <property type="project" value="UniProtKB"/>
</dbReference>
<dbReference type="GO" id="GO:0046872">
    <property type="term" value="F:metal ion binding"/>
    <property type="evidence" value="ECO:0007669"/>
    <property type="project" value="UniProtKB-KW"/>
</dbReference>
<dbReference type="GO" id="GO:0009887">
    <property type="term" value="P:animal organ morphogenesis"/>
    <property type="evidence" value="ECO:0000304"/>
    <property type="project" value="ProtInc"/>
</dbReference>
<dbReference type="GO" id="GO:0018063">
    <property type="term" value="P:cytochrome c-heme linkage"/>
    <property type="evidence" value="ECO:0000314"/>
    <property type="project" value="UniProtKB"/>
</dbReference>
<dbReference type="GO" id="GO:0022904">
    <property type="term" value="P:respiratory electron transport chain"/>
    <property type="evidence" value="ECO:0000304"/>
    <property type="project" value="Reactome"/>
</dbReference>
<dbReference type="InterPro" id="IPR000511">
    <property type="entry name" value="Holocyt_c/c1_synthase"/>
</dbReference>
<dbReference type="PANTHER" id="PTHR12743">
    <property type="entry name" value="CYTOCHROME C1 HEME LYASE"/>
    <property type="match status" value="1"/>
</dbReference>
<dbReference type="PANTHER" id="PTHR12743:SF0">
    <property type="entry name" value="HOLOCYTOCHROME C-TYPE SYNTHASE"/>
    <property type="match status" value="1"/>
</dbReference>
<dbReference type="Pfam" id="PF01265">
    <property type="entry name" value="Cyto_heme_lyase"/>
    <property type="match status" value="1"/>
</dbReference>
<dbReference type="PROSITE" id="PS00821">
    <property type="entry name" value="CYTO_HEME_LYASE_1"/>
    <property type="match status" value="1"/>
</dbReference>
<dbReference type="PROSITE" id="PS00822">
    <property type="entry name" value="CYTO_HEME_LYASE_2"/>
    <property type="match status" value="1"/>
</dbReference>
<organism>
    <name type="scientific">Homo sapiens</name>
    <name type="common">Human</name>
    <dbReference type="NCBI Taxonomy" id="9606"/>
    <lineage>
        <taxon>Eukaryota</taxon>
        <taxon>Metazoa</taxon>
        <taxon>Chordata</taxon>
        <taxon>Craniata</taxon>
        <taxon>Vertebrata</taxon>
        <taxon>Euteleostomi</taxon>
        <taxon>Mammalia</taxon>
        <taxon>Eutheria</taxon>
        <taxon>Euarchontoglires</taxon>
        <taxon>Primates</taxon>
        <taxon>Haplorrhini</taxon>
        <taxon>Catarrhini</taxon>
        <taxon>Hominidae</taxon>
        <taxon>Homo</taxon>
    </lineage>
</organism>
<gene>
    <name evidence="12" type="primary">HCCS</name>
    <name type="synonym">CCHL</name>
</gene>
<feature type="initiator methionine" description="Removed" evidence="4 5">
    <location>
        <position position="1"/>
    </location>
</feature>
<feature type="chain" id="PRO_0000121712" description="Holocytochrome c-type synthase">
    <location>
        <begin position="2"/>
        <end position="268"/>
    </location>
</feature>
<feature type="repeat" description="HRM 1">
    <location>
        <begin position="24"/>
        <end position="29"/>
    </location>
</feature>
<feature type="repeat" description="HRM 2">
    <location>
        <begin position="34"/>
        <end position="39"/>
    </location>
</feature>
<feature type="region of interest" description="Disordered" evidence="1">
    <location>
        <begin position="1"/>
        <end position="25"/>
    </location>
</feature>
<feature type="compositionally biased region" description="Low complexity" evidence="1">
    <location>
        <begin position="1"/>
        <end position="22"/>
    </location>
</feature>
<feature type="lipid moiety-binding region" description="N-myristoyl glycine" evidence="4 5">
    <location>
        <position position="2"/>
    </location>
</feature>
<feature type="sequence variant" id="VAR_083982" description="In LSDMCA1; loss of function; loss of localization to mitochondrion." evidence="2">
    <location>
        <begin position="197"/>
        <end position="268"/>
    </location>
</feature>
<feature type="sequence variant" id="VAR_030823" description="In LSDMCA1; loss of function; no effect on localization to mitochondrion; dbSNP:rs121917889." evidence="2">
    <original>R</original>
    <variation>C</variation>
    <location>
        <position position="217"/>
    </location>
</feature>
<feature type="mutagenesis site" description="Loss of holocytochrome C synthase activity. Loss of heme-binding. Loss of interaction with cytochrome C." evidence="3">
    <original>H</original>
    <variation>A</variation>
    <variation>G</variation>
    <variation>Y</variation>
    <location>
        <position position="154"/>
    </location>
</feature>
<feature type="mutagenesis site" description="No effect on holocytochrome C synthase activity." evidence="3">
    <original>H</original>
    <variation>A</variation>
    <variation>G</variation>
    <variation>C</variation>
    <variation>Y</variation>
    <location>
        <position position="211"/>
    </location>
</feature>
<proteinExistence type="evidence at protein level"/>
<accession>P53701</accession>
<accession>B3KUS1</accession>
<accession>Q502X8</accession>
<comment type="function">
    <text evidence="3">Lyase that catalyzes the covalent linking of the heme group to the cytochrome C apoprotein to produce the mature functional cytochrome.</text>
</comment>
<comment type="catalytic activity">
    <reaction evidence="3">
        <text>holo-[cytochrome c] = apo-[cytochrome c] + heme b</text>
        <dbReference type="Rhea" id="RHEA:22648"/>
        <dbReference type="Rhea" id="RHEA-COMP:10725"/>
        <dbReference type="Rhea" id="RHEA-COMP:10726"/>
        <dbReference type="ChEBI" id="CHEBI:29950"/>
        <dbReference type="ChEBI" id="CHEBI:60344"/>
        <dbReference type="ChEBI" id="CHEBI:83739"/>
        <dbReference type="EC" id="4.4.1.17"/>
    </reaction>
    <physiologicalReaction direction="right-to-left" evidence="8">
        <dbReference type="Rhea" id="RHEA:22650"/>
    </physiologicalReaction>
</comment>
<comment type="interaction">
    <interactant intactId="EBI-10763431">
        <id>P53701</id>
    </interactant>
    <interactant intactId="EBI-2269837">
        <id>Q53H12</id>
        <label>AGK</label>
    </interactant>
    <organismsDiffer>false</organismsDiffer>
    <experiments>4</experiments>
</comment>
<comment type="interaction">
    <interactant intactId="EBI-10763431">
        <id>P53701</id>
    </interactant>
    <interactant intactId="EBI-1210710">
        <id>Q8N3C0</id>
        <label>ASCC3</label>
    </interactant>
    <organismsDiffer>false</organismsDiffer>
    <experiments>2</experiments>
</comment>
<comment type="interaction">
    <interactant intactId="EBI-10763431">
        <id>P53701</id>
    </interactant>
    <interactant intactId="EBI-6624398">
        <id>P06307</id>
        <label>CCK</label>
    </interactant>
    <organismsDiffer>false</organismsDiffer>
    <experiments>3</experiments>
</comment>
<comment type="interaction">
    <interactant intactId="EBI-10763431">
        <id>P53701</id>
    </interactant>
    <interactant intactId="EBI-11521409">
        <id>Q9BSY4</id>
        <label>CHCHD5</label>
    </interactant>
    <organismsDiffer>false</organismsDiffer>
    <experiments>2</experiments>
</comment>
<comment type="interaction">
    <interactant intactId="EBI-10763431">
        <id>P53701</id>
    </interactant>
    <interactant intactId="EBI-7062247">
        <id>Q9UHD4</id>
        <label>CIDEB</label>
    </interactant>
    <organismsDiffer>false</organismsDiffer>
    <experiments>3</experiments>
</comment>
<comment type="interaction">
    <interactant intactId="EBI-10763431">
        <id>P53701</id>
    </interactant>
    <interactant intactId="EBI-714881">
        <id>Q9HC62</id>
        <label>SENP2</label>
    </interactant>
    <organismsDiffer>false</organismsDiffer>
    <experiments>3</experiments>
</comment>
<comment type="interaction">
    <interactant intactId="EBI-10763431">
        <id>P53701</id>
    </interactant>
    <interactant intactId="EBI-2623095">
        <id>Q9Y371</id>
        <label>SH3GLB1</label>
    </interactant>
    <organismsDiffer>false</organismsDiffer>
    <experiments>3</experiments>
</comment>
<comment type="interaction">
    <interactant intactId="EBI-10763431">
        <id>P53701</id>
    </interactant>
    <interactant intactId="EBI-2822329">
        <id>Q13596</id>
        <label>SNX1</label>
    </interactant>
    <organismsDiffer>false</organismsDiffer>
    <experiments>3</experiments>
</comment>
<comment type="subcellular location">
    <subcellularLocation>
        <location evidence="7">Mitochondrion inner membrane</location>
    </subcellularLocation>
    <subcellularLocation>
        <location evidence="3">Membrane</location>
        <topology evidence="9 10">Lipid-anchor</topology>
    </subcellularLocation>
</comment>
<comment type="disease" evidence="2">
    <disease id="DI-00765">
        <name>Linear skin defects with multiple congenital anomalies 1</name>
        <acronym>LSDMCA1</acronym>
        <description>A disorder characterized by dermal, ocular, neurological and cardiac abnormalities. LSDMCA1 main features are unilateral or bilateral microphthalmia, linear skin defects in affected females, and in utero lethality for males. Skin defects are limited to the face and neck, consisting of areas of aplastic skin that heal with age to form hyperpigmented areas. Additional features in female patients include agenesis of the corpus callosum, sclerocornea, chorioretinal abnormalities, infantile seizures, congenital heart defect, intellectual disability, and diaphragmatic hernia. Microphthalmia is a disorder of eye formation, ranging from small size of a single eye to complete bilateral absence of ocular tissues (anophthalmia). In many cases, microphthalmia/anophthalmia occurs in association with syndromes that include non-ocular abnormalities.</description>
        <dbReference type="MIM" id="309801"/>
    </disease>
    <text>The disease is caused by variants affecting the gene represented in this entry.</text>
</comment>
<comment type="similarity">
    <text evidence="6">Belongs to the cytochrome c-type heme lyase family.</text>
</comment>